<dbReference type="EC" id="2.1.2.1" evidence="1"/>
<dbReference type="EMBL" id="AE017285">
    <property type="protein sequence ID" value="AAS95681.1"/>
    <property type="molecule type" value="Genomic_DNA"/>
</dbReference>
<dbReference type="RefSeq" id="WP_010938499.1">
    <property type="nucleotide sequence ID" value="NC_002937.3"/>
</dbReference>
<dbReference type="RefSeq" id="YP_010422.1">
    <property type="nucleotide sequence ID" value="NC_002937.3"/>
</dbReference>
<dbReference type="SMR" id="Q72CT0"/>
<dbReference type="IntAct" id="Q72CT0">
    <property type="interactions" value="4"/>
</dbReference>
<dbReference type="STRING" id="882.DVU_1203"/>
<dbReference type="PaxDb" id="882-DVU_1203"/>
<dbReference type="EnsemblBacteria" id="AAS95681">
    <property type="protein sequence ID" value="AAS95681"/>
    <property type="gene ID" value="DVU_1203"/>
</dbReference>
<dbReference type="KEGG" id="dvu:DVU_1203"/>
<dbReference type="PATRIC" id="fig|882.5.peg.1127"/>
<dbReference type="eggNOG" id="COG0112">
    <property type="taxonomic scope" value="Bacteria"/>
</dbReference>
<dbReference type="HOGENOM" id="CLU_022477_2_1_7"/>
<dbReference type="OrthoDB" id="9803846at2"/>
<dbReference type="PhylomeDB" id="Q72CT0"/>
<dbReference type="UniPathway" id="UPA00193"/>
<dbReference type="UniPathway" id="UPA00288">
    <property type="reaction ID" value="UER01023"/>
</dbReference>
<dbReference type="Proteomes" id="UP000002194">
    <property type="component" value="Chromosome"/>
</dbReference>
<dbReference type="GO" id="GO:0005829">
    <property type="term" value="C:cytosol"/>
    <property type="evidence" value="ECO:0007669"/>
    <property type="project" value="TreeGrafter"/>
</dbReference>
<dbReference type="GO" id="GO:0004372">
    <property type="term" value="F:glycine hydroxymethyltransferase activity"/>
    <property type="evidence" value="ECO:0007669"/>
    <property type="project" value="UniProtKB-UniRule"/>
</dbReference>
<dbReference type="GO" id="GO:0030170">
    <property type="term" value="F:pyridoxal phosphate binding"/>
    <property type="evidence" value="ECO:0007669"/>
    <property type="project" value="UniProtKB-UniRule"/>
</dbReference>
<dbReference type="GO" id="GO:0019264">
    <property type="term" value="P:glycine biosynthetic process from serine"/>
    <property type="evidence" value="ECO:0007669"/>
    <property type="project" value="UniProtKB-UniRule"/>
</dbReference>
<dbReference type="GO" id="GO:0035999">
    <property type="term" value="P:tetrahydrofolate interconversion"/>
    <property type="evidence" value="ECO:0007669"/>
    <property type="project" value="UniProtKB-UniRule"/>
</dbReference>
<dbReference type="CDD" id="cd00378">
    <property type="entry name" value="SHMT"/>
    <property type="match status" value="1"/>
</dbReference>
<dbReference type="FunFam" id="3.40.640.10:FF:000001">
    <property type="entry name" value="Serine hydroxymethyltransferase"/>
    <property type="match status" value="1"/>
</dbReference>
<dbReference type="FunFam" id="3.90.1150.10:FF:000003">
    <property type="entry name" value="Serine hydroxymethyltransferase"/>
    <property type="match status" value="1"/>
</dbReference>
<dbReference type="Gene3D" id="3.90.1150.10">
    <property type="entry name" value="Aspartate Aminotransferase, domain 1"/>
    <property type="match status" value="1"/>
</dbReference>
<dbReference type="Gene3D" id="3.40.640.10">
    <property type="entry name" value="Type I PLP-dependent aspartate aminotransferase-like (Major domain)"/>
    <property type="match status" value="1"/>
</dbReference>
<dbReference type="HAMAP" id="MF_00051">
    <property type="entry name" value="SHMT"/>
    <property type="match status" value="1"/>
</dbReference>
<dbReference type="InterPro" id="IPR015424">
    <property type="entry name" value="PyrdxlP-dep_Trfase"/>
</dbReference>
<dbReference type="InterPro" id="IPR015421">
    <property type="entry name" value="PyrdxlP-dep_Trfase_major"/>
</dbReference>
<dbReference type="InterPro" id="IPR015422">
    <property type="entry name" value="PyrdxlP-dep_Trfase_small"/>
</dbReference>
<dbReference type="InterPro" id="IPR001085">
    <property type="entry name" value="Ser_HO-MeTrfase"/>
</dbReference>
<dbReference type="InterPro" id="IPR049943">
    <property type="entry name" value="Ser_HO-MeTrfase-like"/>
</dbReference>
<dbReference type="InterPro" id="IPR019798">
    <property type="entry name" value="Ser_HO-MeTrfase_PLP_BS"/>
</dbReference>
<dbReference type="InterPro" id="IPR039429">
    <property type="entry name" value="SHMT-like_dom"/>
</dbReference>
<dbReference type="NCBIfam" id="NF000586">
    <property type="entry name" value="PRK00011.1"/>
    <property type="match status" value="1"/>
</dbReference>
<dbReference type="PANTHER" id="PTHR11680">
    <property type="entry name" value="SERINE HYDROXYMETHYLTRANSFERASE"/>
    <property type="match status" value="1"/>
</dbReference>
<dbReference type="PANTHER" id="PTHR11680:SF50">
    <property type="entry name" value="SERINE HYDROXYMETHYLTRANSFERASE"/>
    <property type="match status" value="1"/>
</dbReference>
<dbReference type="Pfam" id="PF00464">
    <property type="entry name" value="SHMT"/>
    <property type="match status" value="1"/>
</dbReference>
<dbReference type="PIRSF" id="PIRSF000412">
    <property type="entry name" value="SHMT"/>
    <property type="match status" value="1"/>
</dbReference>
<dbReference type="SUPFAM" id="SSF53383">
    <property type="entry name" value="PLP-dependent transferases"/>
    <property type="match status" value="1"/>
</dbReference>
<dbReference type="PROSITE" id="PS00096">
    <property type="entry name" value="SHMT"/>
    <property type="match status" value="1"/>
</dbReference>
<keyword id="KW-0028">Amino-acid biosynthesis</keyword>
<keyword id="KW-0963">Cytoplasm</keyword>
<keyword id="KW-0554">One-carbon metabolism</keyword>
<keyword id="KW-0663">Pyridoxal phosphate</keyword>
<keyword id="KW-1185">Reference proteome</keyword>
<keyword id="KW-0808">Transferase</keyword>
<protein>
    <recommendedName>
        <fullName evidence="1">Serine hydroxymethyltransferase</fullName>
        <shortName evidence="1">SHMT</shortName>
        <shortName evidence="1">Serine methylase</shortName>
        <ecNumber evidence="1">2.1.2.1</ecNumber>
    </recommendedName>
</protein>
<reference key="1">
    <citation type="journal article" date="2004" name="Nat. Biotechnol.">
        <title>The genome sequence of the anaerobic, sulfate-reducing bacterium Desulfovibrio vulgaris Hildenborough.</title>
        <authorList>
            <person name="Heidelberg J.F."/>
            <person name="Seshadri R."/>
            <person name="Haveman S.A."/>
            <person name="Hemme C.L."/>
            <person name="Paulsen I.T."/>
            <person name="Kolonay J.F."/>
            <person name="Eisen J.A."/>
            <person name="Ward N.L."/>
            <person name="Methe B.A."/>
            <person name="Brinkac L.M."/>
            <person name="Daugherty S.C."/>
            <person name="DeBoy R.T."/>
            <person name="Dodson R.J."/>
            <person name="Durkin A.S."/>
            <person name="Madupu R."/>
            <person name="Nelson W.C."/>
            <person name="Sullivan S.A."/>
            <person name="Fouts D.E."/>
            <person name="Haft D.H."/>
            <person name="Selengut J."/>
            <person name="Peterson J.D."/>
            <person name="Davidsen T.M."/>
            <person name="Zafar N."/>
            <person name="Zhou L."/>
            <person name="Radune D."/>
            <person name="Dimitrov G."/>
            <person name="Hance M."/>
            <person name="Tran K."/>
            <person name="Khouri H.M."/>
            <person name="Gill J."/>
            <person name="Utterback T.R."/>
            <person name="Feldblyum T.V."/>
            <person name="Wall J.D."/>
            <person name="Voordouw G."/>
            <person name="Fraser C.M."/>
        </authorList>
    </citation>
    <scope>NUCLEOTIDE SEQUENCE [LARGE SCALE GENOMIC DNA]</scope>
    <source>
        <strain>ATCC 29579 / DSM 644 / CCUG 34227 / NCIMB 8303 / VKM B-1760 / Hildenborough</strain>
    </source>
</reference>
<name>GLYA_NITV2</name>
<organism>
    <name type="scientific">Nitratidesulfovibrio vulgaris (strain ATCC 29579 / DSM 644 / CCUG 34227 / NCIMB 8303 / VKM B-1760 / Hildenborough)</name>
    <name type="common">Desulfovibrio vulgaris</name>
    <dbReference type="NCBI Taxonomy" id="882"/>
    <lineage>
        <taxon>Bacteria</taxon>
        <taxon>Pseudomonadati</taxon>
        <taxon>Thermodesulfobacteriota</taxon>
        <taxon>Desulfovibrionia</taxon>
        <taxon>Desulfovibrionales</taxon>
        <taxon>Desulfovibrionaceae</taxon>
        <taxon>Nitratidesulfovibrio</taxon>
    </lineage>
</organism>
<sequence>MDELLLQDPEVGKAIILEIERQTGKLELIASENFVSAAVRQAQGSVLTHKYAEGYPGKRYYGGCEFVDIAENIAIERARTIFGCEYANVQPHSGSQANMGVYFACLKPGDTILGMNLSHGGHLTHGSPVNFSGRLFNVVFYGVEKETGRIDYEQVAALAREHKPSLIVAGASAYPRTIDFARFRAIADEVGAKLMVDMAHIAGLVAAGYHPSPVQHAHYTTTTTHKTLRGPRGGMILSTEDNGKTLNSQIFPGIQGGPLMHVIAAKAVAFGEALRPAFKEYQKQVVDNAAALAGVLTAAGFDLVSGGTDNHLMLVDLTSKDVTGKDAEIALDKAGITVNKNTVPFETRSPFVTSGVRLGTPALTTRGMKAAEMEKVGGWIVDAIANTTNETRLAEISREVERFARQFPLFAW</sequence>
<gene>
    <name evidence="1" type="primary">glyA</name>
    <name type="ordered locus">DVU_1203</name>
</gene>
<feature type="chain" id="PRO_0000113572" description="Serine hydroxymethyltransferase">
    <location>
        <begin position="1"/>
        <end position="412"/>
    </location>
</feature>
<feature type="binding site" evidence="1">
    <location>
        <position position="117"/>
    </location>
    <ligand>
        <name>(6S)-5,6,7,8-tetrahydrofolate</name>
        <dbReference type="ChEBI" id="CHEBI:57453"/>
    </ligand>
</feature>
<feature type="binding site" evidence="1">
    <location>
        <begin position="121"/>
        <end position="123"/>
    </location>
    <ligand>
        <name>(6S)-5,6,7,8-tetrahydrofolate</name>
        <dbReference type="ChEBI" id="CHEBI:57453"/>
    </ligand>
</feature>
<feature type="binding site" evidence="1">
    <location>
        <begin position="349"/>
        <end position="351"/>
    </location>
    <ligand>
        <name>(6S)-5,6,7,8-tetrahydrofolate</name>
        <dbReference type="ChEBI" id="CHEBI:57453"/>
    </ligand>
</feature>
<feature type="site" description="Plays an important role in substrate specificity" evidence="1">
    <location>
        <position position="225"/>
    </location>
</feature>
<feature type="modified residue" description="N6-(pyridoxal phosphate)lysine" evidence="1">
    <location>
        <position position="226"/>
    </location>
</feature>
<comment type="function">
    <text evidence="1">Catalyzes the reversible interconversion of serine and glycine with tetrahydrofolate (THF) serving as the one-carbon carrier. This reaction serves as the major source of one-carbon groups required for the biosynthesis of purines, thymidylate, methionine, and other important biomolecules. Also exhibits THF-independent aldolase activity toward beta-hydroxyamino acids, producing glycine and aldehydes, via a retro-aldol mechanism.</text>
</comment>
<comment type="catalytic activity">
    <reaction evidence="1">
        <text>(6R)-5,10-methylene-5,6,7,8-tetrahydrofolate + glycine + H2O = (6S)-5,6,7,8-tetrahydrofolate + L-serine</text>
        <dbReference type="Rhea" id="RHEA:15481"/>
        <dbReference type="ChEBI" id="CHEBI:15377"/>
        <dbReference type="ChEBI" id="CHEBI:15636"/>
        <dbReference type="ChEBI" id="CHEBI:33384"/>
        <dbReference type="ChEBI" id="CHEBI:57305"/>
        <dbReference type="ChEBI" id="CHEBI:57453"/>
        <dbReference type="EC" id="2.1.2.1"/>
    </reaction>
</comment>
<comment type="cofactor">
    <cofactor evidence="1">
        <name>pyridoxal 5'-phosphate</name>
        <dbReference type="ChEBI" id="CHEBI:597326"/>
    </cofactor>
</comment>
<comment type="pathway">
    <text evidence="1">One-carbon metabolism; tetrahydrofolate interconversion.</text>
</comment>
<comment type="pathway">
    <text evidence="1">Amino-acid biosynthesis; glycine biosynthesis; glycine from L-serine: step 1/1.</text>
</comment>
<comment type="subunit">
    <text evidence="1">Homodimer.</text>
</comment>
<comment type="interaction">
    <interactant intactId="EBI-10065973">
        <id>Q72CT0</id>
    </interactant>
    <interactant intactId="EBI-10065980">
        <id>Q726V4</id>
        <label>DVU_3002</label>
    </interactant>
    <organismsDiffer>false</organismsDiffer>
    <experiments>2</experiments>
</comment>
<comment type="subcellular location">
    <subcellularLocation>
        <location evidence="1">Cytoplasm</location>
    </subcellularLocation>
</comment>
<comment type="similarity">
    <text evidence="1">Belongs to the SHMT family.</text>
</comment>
<evidence type="ECO:0000255" key="1">
    <source>
        <dbReference type="HAMAP-Rule" id="MF_00051"/>
    </source>
</evidence>
<proteinExistence type="evidence at protein level"/>
<accession>Q72CT0</accession>